<reference key="1">
    <citation type="submission" date="2009-01" db="EMBL/GenBank/DDBJ databases">
        <title>Complete sequence of Anaeromyxobacter dehalogenans 2CP-1.</title>
        <authorList>
            <person name="Lucas S."/>
            <person name="Copeland A."/>
            <person name="Lapidus A."/>
            <person name="Glavina del Rio T."/>
            <person name="Dalin E."/>
            <person name="Tice H."/>
            <person name="Bruce D."/>
            <person name="Goodwin L."/>
            <person name="Pitluck S."/>
            <person name="Saunders E."/>
            <person name="Brettin T."/>
            <person name="Detter J.C."/>
            <person name="Han C."/>
            <person name="Larimer F."/>
            <person name="Land M."/>
            <person name="Hauser L."/>
            <person name="Kyrpides N."/>
            <person name="Ovchinnikova G."/>
            <person name="Beliaev A.S."/>
            <person name="Richardson P."/>
        </authorList>
    </citation>
    <scope>NUCLEOTIDE SEQUENCE [LARGE SCALE GENOMIC DNA]</scope>
    <source>
        <strain>2CP-1 / ATCC BAA-258</strain>
    </source>
</reference>
<proteinExistence type="inferred from homology"/>
<keyword id="KW-0238">DNA-binding</keyword>
<keyword id="KW-0479">Metal-binding</keyword>
<keyword id="KW-0533">Nickel</keyword>
<keyword id="KW-0804">Transcription</keyword>
<keyword id="KW-0805">Transcription regulation</keyword>
<feature type="chain" id="PRO_1000135548" description="Putative nickel-responsive regulator">
    <location>
        <begin position="1"/>
        <end position="139"/>
    </location>
</feature>
<feature type="binding site" evidence="1">
    <location>
        <position position="79"/>
    </location>
    <ligand>
        <name>Ni(2+)</name>
        <dbReference type="ChEBI" id="CHEBI:49786"/>
    </ligand>
</feature>
<feature type="binding site" evidence="1">
    <location>
        <position position="90"/>
    </location>
    <ligand>
        <name>Ni(2+)</name>
        <dbReference type="ChEBI" id="CHEBI:49786"/>
    </ligand>
</feature>
<feature type="binding site" evidence="1">
    <location>
        <position position="92"/>
    </location>
    <ligand>
        <name>Ni(2+)</name>
        <dbReference type="ChEBI" id="CHEBI:49786"/>
    </ligand>
</feature>
<feature type="binding site" evidence="1">
    <location>
        <position position="98"/>
    </location>
    <ligand>
        <name>Ni(2+)</name>
        <dbReference type="ChEBI" id="CHEBI:49786"/>
    </ligand>
</feature>
<organism>
    <name type="scientific">Anaeromyxobacter dehalogenans (strain 2CP-1 / ATCC BAA-258)</name>
    <dbReference type="NCBI Taxonomy" id="455488"/>
    <lineage>
        <taxon>Bacteria</taxon>
        <taxon>Pseudomonadati</taxon>
        <taxon>Myxococcota</taxon>
        <taxon>Myxococcia</taxon>
        <taxon>Myxococcales</taxon>
        <taxon>Cystobacterineae</taxon>
        <taxon>Anaeromyxobacteraceae</taxon>
        <taxon>Anaeromyxobacter</taxon>
    </lineage>
</organism>
<name>NIKR_ANAD2</name>
<evidence type="ECO:0000255" key="1">
    <source>
        <dbReference type="HAMAP-Rule" id="MF_00476"/>
    </source>
</evidence>
<protein>
    <recommendedName>
        <fullName evidence="1">Putative nickel-responsive regulator</fullName>
    </recommendedName>
</protein>
<comment type="function">
    <text evidence="1">Transcriptional regulator.</text>
</comment>
<comment type="cofactor">
    <cofactor evidence="1">
        <name>Ni(2+)</name>
        <dbReference type="ChEBI" id="CHEBI:49786"/>
    </cofactor>
    <text evidence="1">Binds 1 nickel ion per subunit.</text>
</comment>
<comment type="similarity">
    <text evidence="1">Belongs to the transcriptional regulatory CopG/NikR family.</text>
</comment>
<sequence length="139" mass="15316">MLERIGISLEDGLLEQFDKLIAEKGYVNRSEAIRDLIRDALVQRAFTESSGREERVAVVTLVYDHDSSSLAQKLAHIQHENHRAVVSALHVHMDPHNCLEVLVLRGRGKDVVAMGESLVATRGVKYGKLVPATAGHDLG</sequence>
<gene>
    <name type="ordered locus">A2cp1_0525</name>
</gene>
<dbReference type="EMBL" id="CP001359">
    <property type="protein sequence ID" value="ACL63882.1"/>
    <property type="molecule type" value="Genomic_DNA"/>
</dbReference>
<dbReference type="RefSeq" id="WP_012631930.1">
    <property type="nucleotide sequence ID" value="NC_011891.1"/>
</dbReference>
<dbReference type="SMR" id="B8JBW0"/>
<dbReference type="KEGG" id="acp:A2cp1_0525"/>
<dbReference type="HOGENOM" id="CLU_113319_1_2_7"/>
<dbReference type="Proteomes" id="UP000007089">
    <property type="component" value="Chromosome"/>
</dbReference>
<dbReference type="GO" id="GO:0003677">
    <property type="term" value="F:DNA binding"/>
    <property type="evidence" value="ECO:0007669"/>
    <property type="project" value="UniProtKB-KW"/>
</dbReference>
<dbReference type="GO" id="GO:0003700">
    <property type="term" value="F:DNA-binding transcription factor activity"/>
    <property type="evidence" value="ECO:0007669"/>
    <property type="project" value="UniProtKB-UniRule"/>
</dbReference>
<dbReference type="GO" id="GO:0016151">
    <property type="term" value="F:nickel cation binding"/>
    <property type="evidence" value="ECO:0007669"/>
    <property type="project" value="UniProtKB-UniRule"/>
</dbReference>
<dbReference type="GO" id="GO:0010045">
    <property type="term" value="P:response to nickel cation"/>
    <property type="evidence" value="ECO:0007669"/>
    <property type="project" value="InterPro"/>
</dbReference>
<dbReference type="CDD" id="cd22231">
    <property type="entry name" value="RHH_NikR_HicB-like"/>
    <property type="match status" value="1"/>
</dbReference>
<dbReference type="Gene3D" id="3.30.70.1150">
    <property type="entry name" value="ACT-like. Chain A, domain 2"/>
    <property type="match status" value="1"/>
</dbReference>
<dbReference type="Gene3D" id="1.10.1220.10">
    <property type="entry name" value="Met repressor-like"/>
    <property type="match status" value="1"/>
</dbReference>
<dbReference type="HAMAP" id="MF_00476">
    <property type="entry name" value="NikR"/>
    <property type="match status" value="1"/>
</dbReference>
<dbReference type="InterPro" id="IPR027271">
    <property type="entry name" value="Acetolactate_synth/TF_NikR_C"/>
</dbReference>
<dbReference type="InterPro" id="IPR045865">
    <property type="entry name" value="ACT-like_dom_sf"/>
</dbReference>
<dbReference type="InterPro" id="IPR013321">
    <property type="entry name" value="Arc_rbn_hlx_hlx"/>
</dbReference>
<dbReference type="InterPro" id="IPR002145">
    <property type="entry name" value="CopG"/>
</dbReference>
<dbReference type="InterPro" id="IPR050192">
    <property type="entry name" value="CopG/NikR_regulator"/>
</dbReference>
<dbReference type="InterPro" id="IPR022988">
    <property type="entry name" value="Ni_resp_reg_NikR"/>
</dbReference>
<dbReference type="InterPro" id="IPR010985">
    <property type="entry name" value="Ribbon_hlx_hlx"/>
</dbReference>
<dbReference type="InterPro" id="IPR014864">
    <property type="entry name" value="TF_NikR_Ni-bd_C"/>
</dbReference>
<dbReference type="NCBIfam" id="NF001884">
    <property type="entry name" value="PRK00630.1"/>
    <property type="match status" value="1"/>
</dbReference>
<dbReference type="NCBIfam" id="NF002169">
    <property type="entry name" value="PRK01002.1"/>
    <property type="match status" value="1"/>
</dbReference>
<dbReference type="NCBIfam" id="NF002815">
    <property type="entry name" value="PRK02967.1"/>
    <property type="match status" value="1"/>
</dbReference>
<dbReference type="NCBIfam" id="NF003381">
    <property type="entry name" value="PRK04460.1"/>
    <property type="match status" value="1"/>
</dbReference>
<dbReference type="PANTHER" id="PTHR34719">
    <property type="entry name" value="NICKEL-RESPONSIVE REGULATOR"/>
    <property type="match status" value="1"/>
</dbReference>
<dbReference type="PANTHER" id="PTHR34719:SF2">
    <property type="entry name" value="NICKEL-RESPONSIVE REGULATOR"/>
    <property type="match status" value="1"/>
</dbReference>
<dbReference type="Pfam" id="PF08753">
    <property type="entry name" value="NikR_C"/>
    <property type="match status" value="1"/>
</dbReference>
<dbReference type="Pfam" id="PF01402">
    <property type="entry name" value="RHH_1"/>
    <property type="match status" value="1"/>
</dbReference>
<dbReference type="SUPFAM" id="SSF55021">
    <property type="entry name" value="ACT-like"/>
    <property type="match status" value="1"/>
</dbReference>
<dbReference type="SUPFAM" id="SSF47598">
    <property type="entry name" value="Ribbon-helix-helix"/>
    <property type="match status" value="1"/>
</dbReference>
<accession>B8JBW0</accession>